<protein>
    <recommendedName>
        <fullName>Ras-related protein RabU</fullName>
    </recommendedName>
</protein>
<keyword id="KW-0342">GTP-binding</keyword>
<keyword id="KW-0547">Nucleotide-binding</keyword>
<keyword id="KW-1185">Reference proteome</keyword>
<reference key="1">
    <citation type="journal article" date="2005" name="Nature">
        <title>The genome of the social amoeba Dictyostelium discoideum.</title>
        <authorList>
            <person name="Eichinger L."/>
            <person name="Pachebat J.A."/>
            <person name="Gloeckner G."/>
            <person name="Rajandream M.A."/>
            <person name="Sucgang R."/>
            <person name="Berriman M."/>
            <person name="Song J."/>
            <person name="Olsen R."/>
            <person name="Szafranski K."/>
            <person name="Xu Q."/>
            <person name="Tunggal B."/>
            <person name="Kummerfeld S."/>
            <person name="Madera M."/>
            <person name="Konfortov B.A."/>
            <person name="Rivero F."/>
            <person name="Bankier A.T."/>
            <person name="Lehmann R."/>
            <person name="Hamlin N."/>
            <person name="Davies R."/>
            <person name="Gaudet P."/>
            <person name="Fey P."/>
            <person name="Pilcher K."/>
            <person name="Chen G."/>
            <person name="Saunders D."/>
            <person name="Sodergren E.J."/>
            <person name="Davis P."/>
            <person name="Kerhornou A."/>
            <person name="Nie X."/>
            <person name="Hall N."/>
            <person name="Anjard C."/>
            <person name="Hemphill L."/>
            <person name="Bason N."/>
            <person name="Farbrother P."/>
            <person name="Desany B."/>
            <person name="Just E."/>
            <person name="Morio T."/>
            <person name="Rost R."/>
            <person name="Churcher C.M."/>
            <person name="Cooper J."/>
            <person name="Haydock S."/>
            <person name="van Driessche N."/>
            <person name="Cronin A."/>
            <person name="Goodhead I."/>
            <person name="Muzny D.M."/>
            <person name="Mourier T."/>
            <person name="Pain A."/>
            <person name="Lu M."/>
            <person name="Harper D."/>
            <person name="Lindsay R."/>
            <person name="Hauser H."/>
            <person name="James K.D."/>
            <person name="Quiles M."/>
            <person name="Madan Babu M."/>
            <person name="Saito T."/>
            <person name="Buchrieser C."/>
            <person name="Wardroper A."/>
            <person name="Felder M."/>
            <person name="Thangavelu M."/>
            <person name="Johnson D."/>
            <person name="Knights A."/>
            <person name="Loulseged H."/>
            <person name="Mungall K.L."/>
            <person name="Oliver K."/>
            <person name="Price C."/>
            <person name="Quail M.A."/>
            <person name="Urushihara H."/>
            <person name="Hernandez J."/>
            <person name="Rabbinowitsch E."/>
            <person name="Steffen D."/>
            <person name="Sanders M."/>
            <person name="Ma J."/>
            <person name="Kohara Y."/>
            <person name="Sharp S."/>
            <person name="Simmonds M.N."/>
            <person name="Spiegler S."/>
            <person name="Tivey A."/>
            <person name="Sugano S."/>
            <person name="White B."/>
            <person name="Walker D."/>
            <person name="Woodward J.R."/>
            <person name="Winckler T."/>
            <person name="Tanaka Y."/>
            <person name="Shaulsky G."/>
            <person name="Schleicher M."/>
            <person name="Weinstock G.M."/>
            <person name="Rosenthal A."/>
            <person name="Cox E.C."/>
            <person name="Chisholm R.L."/>
            <person name="Gibbs R.A."/>
            <person name="Loomis W.F."/>
            <person name="Platzer M."/>
            <person name="Kay R.R."/>
            <person name="Williams J.G."/>
            <person name="Dear P.H."/>
            <person name="Noegel A.A."/>
            <person name="Barrell B.G."/>
            <person name="Kuspa A."/>
        </authorList>
    </citation>
    <scope>NUCLEOTIDE SEQUENCE [LARGE SCALE GENOMIC DNA]</scope>
    <source>
        <strain>AX4</strain>
    </source>
</reference>
<gene>
    <name type="primary">rabU</name>
    <name type="ORF">DDB_G0291293</name>
</gene>
<dbReference type="EMBL" id="AAFI02000177">
    <property type="protein sequence ID" value="EAL61630.1"/>
    <property type="molecule type" value="Genomic_DNA"/>
</dbReference>
<dbReference type="RefSeq" id="XP_635121.1">
    <property type="nucleotide sequence ID" value="XM_630029.1"/>
</dbReference>
<dbReference type="SMR" id="Q54EW9"/>
<dbReference type="STRING" id="44689.Q54EW9"/>
<dbReference type="PaxDb" id="44689-DDB0230031"/>
<dbReference type="EnsemblProtists" id="EAL61630">
    <property type="protein sequence ID" value="EAL61630"/>
    <property type="gene ID" value="DDB_G0291293"/>
</dbReference>
<dbReference type="GeneID" id="8628068"/>
<dbReference type="KEGG" id="ddi:DDB_G0291293"/>
<dbReference type="dictyBase" id="DDB_G0291293">
    <property type="gene designation" value="rabU"/>
</dbReference>
<dbReference type="VEuPathDB" id="AmoebaDB:DDB_G0291293"/>
<dbReference type="eggNOG" id="KOG0084">
    <property type="taxonomic scope" value="Eukaryota"/>
</dbReference>
<dbReference type="HOGENOM" id="CLU_1404824_0_0_1"/>
<dbReference type="InParanoid" id="Q54EW9"/>
<dbReference type="PhylomeDB" id="Q54EW9"/>
<dbReference type="Reactome" id="R-DDI-162658">
    <property type="pathway name" value="Golgi Cisternae Pericentriolar Stack Reorganization"/>
</dbReference>
<dbReference type="Reactome" id="R-DDI-204005">
    <property type="pathway name" value="COPII-mediated vesicle transport"/>
</dbReference>
<dbReference type="Reactome" id="R-DDI-6807878">
    <property type="pathway name" value="COPI-mediated anterograde transport"/>
</dbReference>
<dbReference type="Reactome" id="R-DDI-6811434">
    <property type="pathway name" value="COPI-dependent Golgi-to-ER retrograde traffic"/>
</dbReference>
<dbReference type="Reactome" id="R-DDI-6811440">
    <property type="pathway name" value="Retrograde transport at the Trans-Golgi-Network"/>
</dbReference>
<dbReference type="Reactome" id="R-DDI-8873719">
    <property type="pathway name" value="RAB geranylgeranylation"/>
</dbReference>
<dbReference type="Reactome" id="R-DDI-8876198">
    <property type="pathway name" value="RAB GEFs exchange GTP for GDP on RABs"/>
</dbReference>
<dbReference type="PRO" id="PR:Q54EW9"/>
<dbReference type="Proteomes" id="UP000002195">
    <property type="component" value="Chromosome 6"/>
</dbReference>
<dbReference type="GO" id="GO:0012505">
    <property type="term" value="C:endomembrane system"/>
    <property type="evidence" value="ECO:0000318"/>
    <property type="project" value="GO_Central"/>
</dbReference>
<dbReference type="GO" id="GO:0005525">
    <property type="term" value="F:GTP binding"/>
    <property type="evidence" value="ECO:0007669"/>
    <property type="project" value="UniProtKB-KW"/>
</dbReference>
<dbReference type="GO" id="GO:0003924">
    <property type="term" value="F:GTPase activity"/>
    <property type="evidence" value="ECO:0000318"/>
    <property type="project" value="GO_Central"/>
</dbReference>
<dbReference type="GO" id="GO:0006886">
    <property type="term" value="P:intracellular protein transport"/>
    <property type="evidence" value="ECO:0000318"/>
    <property type="project" value="GO_Central"/>
</dbReference>
<dbReference type="CDD" id="cd00154">
    <property type="entry name" value="Rab"/>
    <property type="match status" value="1"/>
</dbReference>
<dbReference type="FunFam" id="3.40.50.300:FF:001447">
    <property type="entry name" value="Ras-related protein Rab-1B"/>
    <property type="match status" value="1"/>
</dbReference>
<dbReference type="Gene3D" id="3.40.50.300">
    <property type="entry name" value="P-loop containing nucleotide triphosphate hydrolases"/>
    <property type="match status" value="1"/>
</dbReference>
<dbReference type="InterPro" id="IPR027417">
    <property type="entry name" value="P-loop_NTPase"/>
</dbReference>
<dbReference type="InterPro" id="IPR001806">
    <property type="entry name" value="Small_GTPase"/>
</dbReference>
<dbReference type="InterPro" id="IPR050305">
    <property type="entry name" value="Small_GTPase_Rab"/>
</dbReference>
<dbReference type="PANTHER" id="PTHR47980">
    <property type="entry name" value="LD44762P"/>
    <property type="match status" value="1"/>
</dbReference>
<dbReference type="Pfam" id="PF00071">
    <property type="entry name" value="Ras"/>
    <property type="match status" value="1"/>
</dbReference>
<dbReference type="PRINTS" id="PR00449">
    <property type="entry name" value="RASTRNSFRMNG"/>
</dbReference>
<dbReference type="SMART" id="SM00175">
    <property type="entry name" value="RAB"/>
    <property type="match status" value="1"/>
</dbReference>
<dbReference type="SMART" id="SM00173">
    <property type="entry name" value="RAS"/>
    <property type="match status" value="1"/>
</dbReference>
<dbReference type="SUPFAM" id="SSF52540">
    <property type="entry name" value="P-loop containing nucleoside triphosphate hydrolases"/>
    <property type="match status" value="1"/>
</dbReference>
<dbReference type="PROSITE" id="PS51419">
    <property type="entry name" value="RAB"/>
    <property type="match status" value="1"/>
</dbReference>
<feature type="chain" id="PRO_0000332771" description="Ras-related protein RabU">
    <location>
        <begin position="1"/>
        <end position="194"/>
    </location>
</feature>
<feature type="short sequence motif" description="Effector region" evidence="1">
    <location>
        <begin position="42"/>
        <end position="50"/>
    </location>
</feature>
<feature type="binding site" evidence="1">
    <location>
        <begin position="19"/>
        <end position="27"/>
    </location>
    <ligand>
        <name>GTP</name>
        <dbReference type="ChEBI" id="CHEBI:37565"/>
    </ligand>
</feature>
<feature type="binding site" evidence="1">
    <location>
        <begin position="68"/>
        <end position="72"/>
    </location>
    <ligand>
        <name>GTP</name>
        <dbReference type="ChEBI" id="CHEBI:37565"/>
    </ligand>
</feature>
<feature type="binding site" evidence="1">
    <location>
        <begin position="130"/>
        <end position="133"/>
    </location>
    <ligand>
        <name>GTP</name>
        <dbReference type="ChEBI" id="CHEBI:37565"/>
    </ligand>
</feature>
<evidence type="ECO:0000250" key="1"/>
<evidence type="ECO:0000305" key="2"/>
<proteinExistence type="inferred from homology"/>
<sequence length="194" mass="22810">MEKKKNLEQDCIFRIVIIGYDYECGIKSLLKKFTLGEFSPFPESQVGVDFDIKTINVDNQDIKLQIWPQNKYFNDTSDKRDFLYKGAHGYLLVYGCHSQKSFDNLLNDWMVQIDKFSNEFSKRNLVLVCNNSETPETYMTKPNYLVDSNITKQWANSKNIPFFEINPKENFNVDEPFIQLARLIKNQNFINSTK</sequence>
<comment type="similarity">
    <text evidence="2">Belongs to the small GTPase superfamily. Rab family.</text>
</comment>
<accession>Q54EW9</accession>
<organism>
    <name type="scientific">Dictyostelium discoideum</name>
    <name type="common">Social amoeba</name>
    <dbReference type="NCBI Taxonomy" id="44689"/>
    <lineage>
        <taxon>Eukaryota</taxon>
        <taxon>Amoebozoa</taxon>
        <taxon>Evosea</taxon>
        <taxon>Eumycetozoa</taxon>
        <taxon>Dictyostelia</taxon>
        <taxon>Dictyosteliales</taxon>
        <taxon>Dictyosteliaceae</taxon>
        <taxon>Dictyostelium</taxon>
    </lineage>
</organism>
<name>RABU_DICDI</name>